<comment type="function">
    <text evidence="3">Component of the ubiquinol-cytochrome c reductase complex (complex III or cytochrome b-c1 complex) that is part of the mitochondrial respiratory chain. The b-c1 complex mediates electron transfer from ubiquinol to cytochrome c. Contributes to the generation of a proton gradient across the mitochondrial membrane that is then used for ATP synthesis.</text>
</comment>
<comment type="cofactor">
    <cofactor evidence="3">
        <name>heme b</name>
        <dbReference type="ChEBI" id="CHEBI:60344"/>
    </cofactor>
    <text evidence="3">Binds 2 heme b groups non-covalently.</text>
</comment>
<comment type="subunit">
    <text evidence="1">The main subunits of complex b-c1 are: cytochrome b, cytochrome c1 and the Rieske protein.</text>
</comment>
<comment type="subcellular location">
    <subcellularLocation>
        <location evidence="3">Mitochondrion inner membrane</location>
        <topology evidence="3">Multi-pass membrane protein</topology>
    </subcellularLocation>
</comment>
<comment type="miscellaneous">
    <text evidence="1">Heme 1 (or BL or b562) is low-potential and absorbs at about 562 nm, and heme 2 (or BH or b566) is high-potential and absorbs at about 566 nm.</text>
</comment>
<comment type="similarity">
    <text evidence="5 6">Belongs to the cytochrome b family.</text>
</comment>
<comment type="caution">
    <text evidence="3">The protein contains an even number of transmembrane helices, fewer than predicted by bioinformatics tools.</text>
</comment>
<proteinExistence type="inferred from homology"/>
<dbReference type="EMBL" id="AF055587">
    <property type="protein sequence ID" value="AAD05206.1"/>
    <property type="molecule type" value="Genomic_DNA"/>
</dbReference>
<dbReference type="RefSeq" id="YP_272128.1">
    <property type="nucleotide sequence ID" value="NC_007243.1"/>
</dbReference>
<dbReference type="SMR" id="O63696"/>
<dbReference type="GeneID" id="3562407"/>
<dbReference type="KEGG" id="pvx:PlvioMp3"/>
<dbReference type="PhylomeDB" id="O63696"/>
<dbReference type="GO" id="GO:0005743">
    <property type="term" value="C:mitochondrial inner membrane"/>
    <property type="evidence" value="ECO:0007669"/>
    <property type="project" value="UniProtKB-SubCell"/>
</dbReference>
<dbReference type="GO" id="GO:0046872">
    <property type="term" value="F:metal ion binding"/>
    <property type="evidence" value="ECO:0007669"/>
    <property type="project" value="UniProtKB-KW"/>
</dbReference>
<dbReference type="GO" id="GO:0008121">
    <property type="term" value="F:ubiquinol-cytochrome-c reductase activity"/>
    <property type="evidence" value="ECO:0007669"/>
    <property type="project" value="TreeGrafter"/>
</dbReference>
<dbReference type="GO" id="GO:0006122">
    <property type="term" value="P:mitochondrial electron transport, ubiquinol to cytochrome c"/>
    <property type="evidence" value="ECO:0007669"/>
    <property type="project" value="TreeGrafter"/>
</dbReference>
<dbReference type="CDD" id="cd00284">
    <property type="entry name" value="Cytochrome_b_N"/>
    <property type="match status" value="1"/>
</dbReference>
<dbReference type="FunFam" id="1.20.810.10:FF:000008">
    <property type="entry name" value="Cytochrome b"/>
    <property type="match status" value="1"/>
</dbReference>
<dbReference type="Gene3D" id="1.20.810.10">
    <property type="entry name" value="Cytochrome Bc1 Complex, Chain C"/>
    <property type="match status" value="1"/>
</dbReference>
<dbReference type="InterPro" id="IPR005798">
    <property type="entry name" value="Cyt_b/b6_C"/>
</dbReference>
<dbReference type="InterPro" id="IPR036150">
    <property type="entry name" value="Cyt_b/b6_C_sf"/>
</dbReference>
<dbReference type="InterPro" id="IPR005797">
    <property type="entry name" value="Cyt_b/b6_N"/>
</dbReference>
<dbReference type="InterPro" id="IPR027387">
    <property type="entry name" value="Cytb/b6-like_sf"/>
</dbReference>
<dbReference type="InterPro" id="IPR048259">
    <property type="entry name" value="Cytochrome_b_N_euk/bac"/>
</dbReference>
<dbReference type="InterPro" id="IPR016174">
    <property type="entry name" value="Di-haem_cyt_TM"/>
</dbReference>
<dbReference type="PANTHER" id="PTHR19271">
    <property type="entry name" value="CYTOCHROME B"/>
    <property type="match status" value="1"/>
</dbReference>
<dbReference type="PANTHER" id="PTHR19271:SF16">
    <property type="entry name" value="CYTOCHROME B"/>
    <property type="match status" value="1"/>
</dbReference>
<dbReference type="Pfam" id="PF00032">
    <property type="entry name" value="Cytochrom_B_C"/>
    <property type="match status" value="1"/>
</dbReference>
<dbReference type="Pfam" id="PF00033">
    <property type="entry name" value="Cytochrome_B"/>
    <property type="match status" value="1"/>
</dbReference>
<dbReference type="SUPFAM" id="SSF81648">
    <property type="entry name" value="a domain/subunit of cytochrome bc1 complex (Ubiquinol-cytochrome c reductase)"/>
    <property type="match status" value="1"/>
</dbReference>
<dbReference type="SUPFAM" id="SSF81342">
    <property type="entry name" value="Transmembrane di-heme cytochromes"/>
    <property type="match status" value="1"/>
</dbReference>
<dbReference type="PROSITE" id="PS51003">
    <property type="entry name" value="CYTB_CTER"/>
    <property type="match status" value="1"/>
</dbReference>
<dbReference type="PROSITE" id="PS51002">
    <property type="entry name" value="CYTB_NTER"/>
    <property type="match status" value="1"/>
</dbReference>
<reference key="1">
    <citation type="journal article" date="1993" name="Mol. Biochem. Parasitol.">
        <title>Structural features of Plasmodium cytochrome b that may underlie susceptibility to 8-aminoquinolines and hydroxynaphthoquinones.</title>
        <authorList>
            <person name="Vaidya A.B."/>
            <person name="Lashgari M.S."/>
            <person name="Pologe L.G."/>
            <person name="Morrisey J."/>
        </authorList>
    </citation>
    <scope>NUCLEOTIDE SEQUENCE [GENOMIC DNA]</scope>
</reference>
<keyword id="KW-0249">Electron transport</keyword>
<keyword id="KW-0349">Heme</keyword>
<keyword id="KW-0408">Iron</keyword>
<keyword id="KW-0472">Membrane</keyword>
<keyword id="KW-0479">Metal-binding</keyword>
<keyword id="KW-0496">Mitochondrion</keyword>
<keyword id="KW-0999">Mitochondrion inner membrane</keyword>
<keyword id="KW-0679">Respiratory chain</keyword>
<keyword id="KW-0812">Transmembrane</keyword>
<keyword id="KW-1133">Transmembrane helix</keyword>
<keyword id="KW-0813">Transport</keyword>
<keyword id="KW-0830">Ubiquinone</keyword>
<gene>
    <name type="primary">MT-CYB</name>
    <name type="synonym">COB</name>
    <name type="synonym">CYTB</name>
    <name type="synonym">MTCYB</name>
</gene>
<organism>
    <name type="scientific">Plasmodium vivax (strain Salvador I)</name>
    <dbReference type="NCBI Taxonomy" id="126793"/>
    <lineage>
        <taxon>Eukaryota</taxon>
        <taxon>Sar</taxon>
        <taxon>Alveolata</taxon>
        <taxon>Apicomplexa</taxon>
        <taxon>Aconoidasida</taxon>
        <taxon>Haemosporida</taxon>
        <taxon>Plasmodiidae</taxon>
        <taxon>Plasmodium</taxon>
        <taxon>Plasmodium (Plasmodium)</taxon>
    </lineage>
</organism>
<feature type="chain" id="PRO_0000061417" description="Cytochrome b">
    <location>
        <begin position="1"/>
        <end position="382"/>
    </location>
</feature>
<feature type="transmembrane region" description="Helical" evidence="3">
    <location>
        <begin position="28"/>
        <end position="48"/>
    </location>
</feature>
<feature type="transmembrane region" description="Helical" evidence="3">
    <location>
        <begin position="72"/>
        <end position="94"/>
    </location>
</feature>
<feature type="transmembrane region" description="Helical" evidence="3">
    <location>
        <begin position="107"/>
        <end position="127"/>
    </location>
</feature>
<feature type="transmembrane region" description="Helical" evidence="3">
    <location>
        <begin position="169"/>
        <end position="189"/>
    </location>
</feature>
<feature type="transmembrane region" description="Helical" evidence="3">
    <location>
        <begin position="214"/>
        <end position="234"/>
    </location>
</feature>
<feature type="transmembrane region" description="Helical" evidence="4">
    <location>
        <begin position="274"/>
        <end position="294"/>
    </location>
</feature>
<feature type="transmembrane region" description="Helical" evidence="4">
    <location>
        <begin position="317"/>
        <end position="337"/>
    </location>
</feature>
<feature type="transmembrane region" description="Helical" evidence="4">
    <location>
        <begin position="340"/>
        <end position="360"/>
    </location>
</feature>
<feature type="binding site" description="axial binding residue" evidence="3">
    <location>
        <position position="78"/>
    </location>
    <ligand>
        <name>heme b</name>
        <dbReference type="ChEBI" id="CHEBI:60344"/>
        <label>b562</label>
    </ligand>
    <ligandPart>
        <name>Fe</name>
        <dbReference type="ChEBI" id="CHEBI:18248"/>
    </ligandPart>
</feature>
<feature type="binding site" description="axial binding residue" evidence="3">
    <location>
        <position position="92"/>
    </location>
    <ligand>
        <name>heme b</name>
        <dbReference type="ChEBI" id="CHEBI:60344"/>
        <label>b566</label>
    </ligand>
    <ligandPart>
        <name>Fe</name>
        <dbReference type="ChEBI" id="CHEBI:18248"/>
    </ligandPart>
</feature>
<feature type="binding site" description="axial binding residue" evidence="3">
    <location>
        <position position="173"/>
    </location>
    <ligand>
        <name>heme b</name>
        <dbReference type="ChEBI" id="CHEBI:60344"/>
        <label>b562</label>
    </ligand>
    <ligandPart>
        <name>Fe</name>
        <dbReference type="ChEBI" id="CHEBI:18248"/>
    </ligandPart>
</feature>
<feature type="binding site" description="axial binding residue" evidence="3">
    <location>
        <position position="187"/>
    </location>
    <ligand>
        <name>heme b</name>
        <dbReference type="ChEBI" id="CHEBI:60344"/>
        <label>b566</label>
    </ligand>
    <ligandPart>
        <name>Fe</name>
        <dbReference type="ChEBI" id="CHEBI:18248"/>
    </ligandPart>
</feature>
<feature type="binding site" evidence="2">
    <location>
        <position position="192"/>
    </location>
    <ligand>
        <name>a ubiquinone</name>
        <dbReference type="ChEBI" id="CHEBI:16389"/>
    </ligand>
</feature>
<name>CYB_PLAVS</name>
<accession>O63696</accession>
<evidence type="ECO:0000250" key="1"/>
<evidence type="ECO:0000250" key="2">
    <source>
        <dbReference type="UniProtKB" id="P00157"/>
    </source>
</evidence>
<evidence type="ECO:0000250" key="3">
    <source>
        <dbReference type="UniProtKB" id="P00163"/>
    </source>
</evidence>
<evidence type="ECO:0000255" key="4"/>
<evidence type="ECO:0000255" key="5">
    <source>
        <dbReference type="PROSITE-ProRule" id="PRU00967"/>
    </source>
</evidence>
<evidence type="ECO:0000255" key="6">
    <source>
        <dbReference type="PROSITE-ProRule" id="PRU00968"/>
    </source>
</evidence>
<sequence>MNYYSINLAKAHLLNYPCPLNINFLWNYGFLLGIIFFIQILTGVFLASRYTPEISYAYYSIQHILRELWSGWCFRYMHATGASLVFLLTYLHILRGLNYSYLYLPLSWISGLIIFALFIVTAFIGYVLPWGQMSYWGATVITNLLSSIPVLVIWLCGGYTVSDPTIKRFFVLHFILPFVALCIVFIHIFFLHLHGSTNPLGYDTALKIPFYPNLLSLDVKGFNNIFILFLLQSIFGIIPLSHPDNAILVNTYVTPIQIVPEWYFLPFYAMLKTIPSKTAGLLIVLASLQLLFLLAEQRSLTTIIQFKMTFGAREYSVPMIWFMCSFYALLWIGCQLPQDIFILYGRLFIISFFSSGLFALVHYKRTHYDYSSQANIKITRLR</sequence>
<geneLocation type="mitochondrion"/>
<protein>
    <recommendedName>
        <fullName>Cytochrome b</fullName>
    </recommendedName>
    <alternativeName>
        <fullName>Complex III subunit 3</fullName>
    </alternativeName>
    <alternativeName>
        <fullName>Complex III subunit III</fullName>
    </alternativeName>
    <alternativeName>
        <fullName>Cytochrome b-c1 complex subunit 3</fullName>
    </alternativeName>
    <alternativeName>
        <fullName>Ubiquinol-cytochrome-c reductase complex cytochrome b subunit</fullName>
    </alternativeName>
</protein>